<comment type="function">
    <text evidence="1">Catalyzes the formation of 4-diphosphocytidyl-2-C-methyl-D-erythritol from CTP and 2-C-methyl-D-erythritol 4-phosphate (MEP).</text>
</comment>
<comment type="catalytic activity">
    <reaction evidence="1">
        <text>2-C-methyl-D-erythritol 4-phosphate + CTP + H(+) = 4-CDP-2-C-methyl-D-erythritol + diphosphate</text>
        <dbReference type="Rhea" id="RHEA:13429"/>
        <dbReference type="ChEBI" id="CHEBI:15378"/>
        <dbReference type="ChEBI" id="CHEBI:33019"/>
        <dbReference type="ChEBI" id="CHEBI:37563"/>
        <dbReference type="ChEBI" id="CHEBI:57823"/>
        <dbReference type="ChEBI" id="CHEBI:58262"/>
        <dbReference type="EC" id="2.7.7.60"/>
    </reaction>
</comment>
<comment type="pathway">
    <text evidence="1">Isoprenoid biosynthesis; isopentenyl diphosphate biosynthesis via DXP pathway; isopentenyl diphosphate from 1-deoxy-D-xylulose 5-phosphate: step 2/6.</text>
</comment>
<comment type="similarity">
    <text evidence="1">Belongs to the IspD/TarI cytidylyltransferase family. IspD subfamily.</text>
</comment>
<name>ISPD_SACEN</name>
<organism>
    <name type="scientific">Saccharopolyspora erythraea (strain ATCC 11635 / DSM 40517 / JCM 4748 / NBRC 13426 / NCIMB 8594 / NRRL 2338)</name>
    <dbReference type="NCBI Taxonomy" id="405948"/>
    <lineage>
        <taxon>Bacteria</taxon>
        <taxon>Bacillati</taxon>
        <taxon>Actinomycetota</taxon>
        <taxon>Actinomycetes</taxon>
        <taxon>Pseudonocardiales</taxon>
        <taxon>Pseudonocardiaceae</taxon>
        <taxon>Saccharopolyspora</taxon>
    </lineage>
</organism>
<proteinExistence type="inferred from homology"/>
<keyword id="KW-0414">Isoprene biosynthesis</keyword>
<keyword id="KW-0548">Nucleotidyltransferase</keyword>
<keyword id="KW-1185">Reference proteome</keyword>
<keyword id="KW-0808">Transferase</keyword>
<reference key="1">
    <citation type="journal article" date="2007" name="Nat. Biotechnol.">
        <title>Complete genome sequence of the erythromycin-producing bacterium Saccharopolyspora erythraea NRRL23338.</title>
        <authorList>
            <person name="Oliynyk M."/>
            <person name="Samborskyy M."/>
            <person name="Lester J.B."/>
            <person name="Mironenko T."/>
            <person name="Scott N."/>
            <person name="Dickens S."/>
            <person name="Haydock S.F."/>
            <person name="Leadlay P.F."/>
        </authorList>
    </citation>
    <scope>NUCLEOTIDE SEQUENCE [LARGE SCALE GENOMIC DNA]</scope>
    <source>
        <strain>ATCC 11635 / DSM 40517 / JCM 4748 / NBRC 13426 / NCIMB 8594 / NRRL 2338</strain>
    </source>
</reference>
<protein>
    <recommendedName>
        <fullName evidence="1">2-C-methyl-D-erythritol 4-phosphate cytidylyltransferase</fullName>
        <ecNumber evidence="1">2.7.7.60</ecNumber>
    </recommendedName>
    <alternativeName>
        <fullName evidence="1">4-diphosphocytidyl-2C-methyl-D-erythritol synthase</fullName>
    </alternativeName>
    <alternativeName>
        <fullName evidence="1">MEP cytidylyltransferase</fullName>
        <shortName evidence="1">MCT</shortName>
    </alternativeName>
</protein>
<gene>
    <name evidence="1" type="primary">ispD</name>
    <name type="ordered locus">SACE_0439</name>
</gene>
<sequence>MSVVALVPAAGRGVRLGAGVPKALVPVAGESLLSRAVRGLHDSGRVRHVVVAAPADEVPAVEAELASLRSFVHVVPGGAERTDSVRLALAEAERVVPDARVVLVHDAARAFTPPSVVRDVVRAVEEGAPAVVPVLPVADTIKQVDEAGDVETTVDRSRLRTVQTPQGFAIDVLRQAYAAAGDIATDDAGLVERIGGKVSTVPGHPHALKITTAFDLAIAEAVLA</sequence>
<evidence type="ECO:0000255" key="1">
    <source>
        <dbReference type="HAMAP-Rule" id="MF_00108"/>
    </source>
</evidence>
<dbReference type="EC" id="2.7.7.60" evidence="1"/>
<dbReference type="EMBL" id="AM420293">
    <property type="protein sequence ID" value="CAL99787.1"/>
    <property type="molecule type" value="Genomic_DNA"/>
</dbReference>
<dbReference type="RefSeq" id="WP_009947447.1">
    <property type="nucleotide sequence ID" value="NC_009142.1"/>
</dbReference>
<dbReference type="SMR" id="A4F6W3"/>
<dbReference type="STRING" id="405948.SACE_0439"/>
<dbReference type="KEGG" id="sen:SACE_0439"/>
<dbReference type="eggNOG" id="COG1211">
    <property type="taxonomic scope" value="Bacteria"/>
</dbReference>
<dbReference type="HOGENOM" id="CLU_061281_1_1_11"/>
<dbReference type="OrthoDB" id="9802561at2"/>
<dbReference type="UniPathway" id="UPA00056">
    <property type="reaction ID" value="UER00093"/>
</dbReference>
<dbReference type="Proteomes" id="UP000006728">
    <property type="component" value="Chromosome"/>
</dbReference>
<dbReference type="GO" id="GO:0050518">
    <property type="term" value="F:2-C-methyl-D-erythritol 4-phosphate cytidylyltransferase activity"/>
    <property type="evidence" value="ECO:0007669"/>
    <property type="project" value="UniProtKB-UniRule"/>
</dbReference>
<dbReference type="GO" id="GO:0019288">
    <property type="term" value="P:isopentenyl diphosphate biosynthetic process, methylerythritol 4-phosphate pathway"/>
    <property type="evidence" value="ECO:0007669"/>
    <property type="project" value="UniProtKB-UniRule"/>
</dbReference>
<dbReference type="CDD" id="cd02516">
    <property type="entry name" value="CDP-ME_synthetase"/>
    <property type="match status" value="1"/>
</dbReference>
<dbReference type="FunFam" id="3.90.550.10:FF:000003">
    <property type="entry name" value="2-C-methyl-D-erythritol 4-phosphate cytidylyltransferase"/>
    <property type="match status" value="1"/>
</dbReference>
<dbReference type="Gene3D" id="3.90.550.10">
    <property type="entry name" value="Spore Coat Polysaccharide Biosynthesis Protein SpsA, Chain A"/>
    <property type="match status" value="1"/>
</dbReference>
<dbReference type="HAMAP" id="MF_00108">
    <property type="entry name" value="IspD"/>
    <property type="match status" value="1"/>
</dbReference>
<dbReference type="InterPro" id="IPR001228">
    <property type="entry name" value="IspD"/>
</dbReference>
<dbReference type="InterPro" id="IPR034683">
    <property type="entry name" value="IspD/TarI"/>
</dbReference>
<dbReference type="InterPro" id="IPR050088">
    <property type="entry name" value="IspD/TarI_cytidylyltransf_bact"/>
</dbReference>
<dbReference type="InterPro" id="IPR018294">
    <property type="entry name" value="ISPD_synthase_CS"/>
</dbReference>
<dbReference type="InterPro" id="IPR029044">
    <property type="entry name" value="Nucleotide-diphossugar_trans"/>
</dbReference>
<dbReference type="NCBIfam" id="TIGR00453">
    <property type="entry name" value="ispD"/>
    <property type="match status" value="1"/>
</dbReference>
<dbReference type="PANTHER" id="PTHR32125">
    <property type="entry name" value="2-C-METHYL-D-ERYTHRITOL 4-PHOSPHATE CYTIDYLYLTRANSFERASE, CHLOROPLASTIC"/>
    <property type="match status" value="1"/>
</dbReference>
<dbReference type="PANTHER" id="PTHR32125:SF4">
    <property type="entry name" value="2-C-METHYL-D-ERYTHRITOL 4-PHOSPHATE CYTIDYLYLTRANSFERASE, CHLOROPLASTIC"/>
    <property type="match status" value="1"/>
</dbReference>
<dbReference type="Pfam" id="PF01128">
    <property type="entry name" value="IspD"/>
    <property type="match status" value="1"/>
</dbReference>
<dbReference type="SUPFAM" id="SSF53448">
    <property type="entry name" value="Nucleotide-diphospho-sugar transferases"/>
    <property type="match status" value="1"/>
</dbReference>
<dbReference type="PROSITE" id="PS01295">
    <property type="entry name" value="ISPD"/>
    <property type="match status" value="1"/>
</dbReference>
<accession>A4F6W3</accession>
<feature type="chain" id="PRO_1000094341" description="2-C-methyl-D-erythritol 4-phosphate cytidylyltransferase">
    <location>
        <begin position="1"/>
        <end position="224"/>
    </location>
</feature>
<feature type="site" description="Transition state stabilizer" evidence="1">
    <location>
        <position position="15"/>
    </location>
</feature>
<feature type="site" description="Transition state stabilizer" evidence="1">
    <location>
        <position position="22"/>
    </location>
</feature>
<feature type="site" description="Positions MEP for the nucleophilic attack" evidence="1">
    <location>
        <position position="156"/>
    </location>
</feature>
<feature type="site" description="Positions MEP for the nucleophilic attack" evidence="1">
    <location>
        <position position="209"/>
    </location>
</feature>